<proteinExistence type="inferred from homology"/>
<organism>
    <name type="scientific">Invertebrate iridescent virus 3</name>
    <name type="common">IIV-3</name>
    <name type="synonym">Mosquito iridescent virus</name>
    <dbReference type="NCBI Taxonomy" id="345201"/>
    <lineage>
        <taxon>Viruses</taxon>
        <taxon>Varidnaviria</taxon>
        <taxon>Bamfordvirae</taxon>
        <taxon>Nucleocytoviricota</taxon>
        <taxon>Megaviricetes</taxon>
        <taxon>Pimascovirales</taxon>
        <taxon>Iridoviridae</taxon>
        <taxon>Betairidovirinae</taxon>
        <taxon>Chloriridovirus</taxon>
    </lineage>
</organism>
<reference key="1">
    <citation type="journal article" date="2006" name="J. Virol.">
        <title>Genome of invertebrate iridescent virus type 3 (mosquito iridescent virus).</title>
        <authorList>
            <person name="Delhon G."/>
            <person name="Tulman E.R."/>
            <person name="Afonso C.L."/>
            <person name="Lu Z."/>
            <person name="Becnel J.J."/>
            <person name="Moser B.A."/>
            <person name="Kutish G.F."/>
            <person name="Rock D.L."/>
        </authorList>
    </citation>
    <scope>NUCLEOTIDE SEQUENCE [LARGE SCALE GENOMIC DNA]</scope>
</reference>
<feature type="chain" id="PRO_0000377909" description="Putative serine/threonine-protein kinase 040L">
    <location>
        <begin position="1"/>
        <end position="335"/>
    </location>
</feature>
<feature type="domain" description="Protein kinase" evidence="1">
    <location>
        <begin position="33"/>
        <end position="329"/>
    </location>
</feature>
<feature type="active site" description="Proton acceptor" evidence="1 2">
    <location>
        <position position="196"/>
    </location>
</feature>
<feature type="binding site" evidence="1">
    <location>
        <begin position="39"/>
        <end position="47"/>
    </location>
    <ligand>
        <name>ATP</name>
        <dbReference type="ChEBI" id="CHEBI:30616"/>
    </ligand>
</feature>
<feature type="binding site" evidence="1">
    <location>
        <position position="62"/>
    </location>
    <ligand>
        <name>ATP</name>
        <dbReference type="ChEBI" id="CHEBI:30616"/>
    </ligand>
</feature>
<keyword id="KW-0067">ATP-binding</keyword>
<keyword id="KW-0418">Kinase</keyword>
<keyword id="KW-0547">Nucleotide-binding</keyword>
<keyword id="KW-1185">Reference proteome</keyword>
<keyword id="KW-0723">Serine/threonine-protein kinase</keyword>
<keyword id="KW-0808">Transferase</keyword>
<name>044L_IIV3</name>
<evidence type="ECO:0000255" key="1">
    <source>
        <dbReference type="PROSITE-ProRule" id="PRU00159"/>
    </source>
</evidence>
<evidence type="ECO:0000255" key="2">
    <source>
        <dbReference type="PROSITE-ProRule" id="PRU10027"/>
    </source>
</evidence>
<accession>Q197B6</accession>
<comment type="similarity">
    <text evidence="1">Belongs to the protein kinase superfamily. Ser/Thr protein kinase family.</text>
</comment>
<gene>
    <name type="ORF">IIV3-044L</name>
</gene>
<organismHost>
    <name type="scientific">Aedes vexans</name>
    <name type="common">Inland floodwater mosquito</name>
    <name type="synonym">Culex vexans</name>
    <dbReference type="NCBI Taxonomy" id="7163"/>
</organismHost>
<organismHost>
    <name type="scientific">Culex territans</name>
    <dbReference type="NCBI Taxonomy" id="42431"/>
</organismHost>
<organismHost>
    <name type="scientific">Culiseta annulata</name>
    <dbReference type="NCBI Taxonomy" id="332058"/>
</organismHost>
<organismHost>
    <name type="scientific">Ochlerotatus sollicitans</name>
    <name type="common">eastern saltmarsh mosquito</name>
    <dbReference type="NCBI Taxonomy" id="310513"/>
</organismHost>
<organismHost>
    <name type="scientific">Ochlerotatus taeniorhynchus</name>
    <name type="common">Black salt marsh mosquito</name>
    <name type="synonym">Aedes taeniorhynchus</name>
    <dbReference type="NCBI Taxonomy" id="329105"/>
</organismHost>
<organismHost>
    <name type="scientific">Psorophora ferox</name>
    <dbReference type="NCBI Taxonomy" id="7183"/>
</organismHost>
<protein>
    <recommendedName>
        <fullName>Putative serine/threonine-protein kinase 040L</fullName>
        <ecNumber>2.7.11.-</ecNumber>
    </recommendedName>
</protein>
<sequence>MPLSVFAEEFAEKSVKRYIGQGLWLPCNLSDYYYYQEFHDEGGYGSIHRVMDKATGNEVIMKHSYKLDFSPGILPEWWSKFGSLTDDLRERVVSNHQLRVSREAQILVQASTVLPEMKLHDYFDDGESFILIMDYGGRSLENIASSHKKKITNLVRYRAYKGNWFYKNWLKQVVDYMIKIYHKIKILYDIGIYHNDLKPENVLVDGDHITIIDFGVADFVPDENERKTWSCYDFRGTIDYIPPEVGTTGSFDPWHQTVWCFGVMLYFLSFMEYPFHIDNQFLEYALEGEKLDKLPEPFAQLIRECLSVDPDKRPLTSLLDRLTELHHHLQTIDVW</sequence>
<dbReference type="EC" id="2.7.11.-"/>
<dbReference type="EMBL" id="DQ643392">
    <property type="protein sequence ID" value="ABF82074.1"/>
    <property type="molecule type" value="Genomic_DNA"/>
</dbReference>
<dbReference type="RefSeq" id="YP_654616.1">
    <property type="nucleotide sequence ID" value="NC_008187.1"/>
</dbReference>
<dbReference type="SMR" id="Q197B6"/>
<dbReference type="KEGG" id="vg:4156354"/>
<dbReference type="OrthoDB" id="8503at10239"/>
<dbReference type="Proteomes" id="UP000001358">
    <property type="component" value="Genome"/>
</dbReference>
<dbReference type="GO" id="GO:0005524">
    <property type="term" value="F:ATP binding"/>
    <property type="evidence" value="ECO:0007669"/>
    <property type="project" value="UniProtKB-KW"/>
</dbReference>
<dbReference type="GO" id="GO:0004674">
    <property type="term" value="F:protein serine/threonine kinase activity"/>
    <property type="evidence" value="ECO:0007669"/>
    <property type="project" value="UniProtKB-KW"/>
</dbReference>
<dbReference type="GO" id="GO:0035556">
    <property type="term" value="P:intracellular signal transduction"/>
    <property type="evidence" value="ECO:0007669"/>
    <property type="project" value="TreeGrafter"/>
</dbReference>
<dbReference type="CDD" id="cd00180">
    <property type="entry name" value="PKc"/>
    <property type="match status" value="1"/>
</dbReference>
<dbReference type="Gene3D" id="3.30.200.20">
    <property type="entry name" value="Phosphorylase Kinase, domain 1"/>
    <property type="match status" value="1"/>
</dbReference>
<dbReference type="Gene3D" id="1.10.510.10">
    <property type="entry name" value="Transferase(Phosphotransferase) domain 1"/>
    <property type="match status" value="1"/>
</dbReference>
<dbReference type="InterPro" id="IPR011009">
    <property type="entry name" value="Kinase-like_dom_sf"/>
</dbReference>
<dbReference type="InterPro" id="IPR000719">
    <property type="entry name" value="Prot_kinase_dom"/>
</dbReference>
<dbReference type="InterPro" id="IPR008271">
    <property type="entry name" value="Ser/Thr_kinase_AS"/>
</dbReference>
<dbReference type="PANTHER" id="PTHR24346:SF82">
    <property type="entry name" value="KP78A-RELATED"/>
    <property type="match status" value="1"/>
</dbReference>
<dbReference type="PANTHER" id="PTHR24346">
    <property type="entry name" value="MAP/MICROTUBULE AFFINITY-REGULATING KINASE"/>
    <property type="match status" value="1"/>
</dbReference>
<dbReference type="Pfam" id="PF00069">
    <property type="entry name" value="Pkinase"/>
    <property type="match status" value="1"/>
</dbReference>
<dbReference type="SMART" id="SM00220">
    <property type="entry name" value="S_TKc"/>
    <property type="match status" value="1"/>
</dbReference>
<dbReference type="SUPFAM" id="SSF56112">
    <property type="entry name" value="Protein kinase-like (PK-like)"/>
    <property type="match status" value="1"/>
</dbReference>
<dbReference type="PROSITE" id="PS50011">
    <property type="entry name" value="PROTEIN_KINASE_DOM"/>
    <property type="match status" value="1"/>
</dbReference>
<dbReference type="PROSITE" id="PS00108">
    <property type="entry name" value="PROTEIN_KINASE_ST"/>
    <property type="match status" value="1"/>
</dbReference>